<dbReference type="EMBL" id="CP000575">
    <property type="protein sequence ID" value="ABN69930.1"/>
    <property type="molecule type" value="Genomic_DNA"/>
</dbReference>
<dbReference type="RefSeq" id="WP_011839121.1">
    <property type="nucleotide sequence ID" value="NC_009033.1"/>
</dbReference>
<dbReference type="SMR" id="A3DMS0"/>
<dbReference type="STRING" id="399550.Smar_0829"/>
<dbReference type="GeneID" id="4907893"/>
<dbReference type="KEGG" id="smr:Smar_0829"/>
<dbReference type="eggNOG" id="arCOG01560">
    <property type="taxonomic scope" value="Archaea"/>
</dbReference>
<dbReference type="HOGENOM" id="CLU_002656_3_3_2"/>
<dbReference type="OrthoDB" id="30957at2157"/>
<dbReference type="Proteomes" id="UP000000254">
    <property type="component" value="Chromosome"/>
</dbReference>
<dbReference type="GO" id="GO:0005737">
    <property type="term" value="C:cytoplasm"/>
    <property type="evidence" value="ECO:0007669"/>
    <property type="project" value="TreeGrafter"/>
</dbReference>
<dbReference type="GO" id="GO:0005525">
    <property type="term" value="F:GTP binding"/>
    <property type="evidence" value="ECO:0007669"/>
    <property type="project" value="UniProtKB-KW"/>
</dbReference>
<dbReference type="GO" id="GO:0003924">
    <property type="term" value="F:GTPase activity"/>
    <property type="evidence" value="ECO:0007669"/>
    <property type="project" value="UniProtKB-UniRule"/>
</dbReference>
<dbReference type="GO" id="GO:0003743">
    <property type="term" value="F:translation initiation factor activity"/>
    <property type="evidence" value="ECO:0007669"/>
    <property type="project" value="UniProtKB-UniRule"/>
</dbReference>
<dbReference type="CDD" id="cd03703">
    <property type="entry name" value="aeIF5B_II"/>
    <property type="match status" value="1"/>
</dbReference>
<dbReference type="CDD" id="cd16266">
    <property type="entry name" value="IF2_aeIF5B_IV"/>
    <property type="match status" value="1"/>
</dbReference>
<dbReference type="CDD" id="cd01887">
    <property type="entry name" value="IF2_eIF5B"/>
    <property type="match status" value="1"/>
</dbReference>
<dbReference type="FunFam" id="3.40.50.300:FF:000112">
    <property type="entry name" value="Eukaryotic translation initiation factor 5B"/>
    <property type="match status" value="1"/>
</dbReference>
<dbReference type="FunFam" id="2.40.30.10:FF:000013">
    <property type="entry name" value="eukaryotic translation initiation factor 5B"/>
    <property type="match status" value="1"/>
</dbReference>
<dbReference type="FunFam" id="3.40.50.10050:FF:000001">
    <property type="entry name" value="Translation initiation factor IF-2"/>
    <property type="match status" value="1"/>
</dbReference>
<dbReference type="Gene3D" id="3.40.50.300">
    <property type="entry name" value="P-loop containing nucleotide triphosphate hydrolases"/>
    <property type="match status" value="1"/>
</dbReference>
<dbReference type="Gene3D" id="2.40.30.10">
    <property type="entry name" value="Translation factors"/>
    <property type="match status" value="2"/>
</dbReference>
<dbReference type="Gene3D" id="3.40.50.10050">
    <property type="entry name" value="Translation initiation factor IF- 2, domain 3"/>
    <property type="match status" value="1"/>
</dbReference>
<dbReference type="HAMAP" id="MF_00100_A">
    <property type="entry name" value="IF_2_A"/>
    <property type="match status" value="1"/>
</dbReference>
<dbReference type="InterPro" id="IPR004161">
    <property type="entry name" value="EFTu-like_2"/>
</dbReference>
<dbReference type="InterPro" id="IPR029459">
    <property type="entry name" value="EFTU-type"/>
</dbReference>
<dbReference type="InterPro" id="IPR027417">
    <property type="entry name" value="P-loop_NTPase"/>
</dbReference>
<dbReference type="InterPro" id="IPR005225">
    <property type="entry name" value="Small_GTP-bd"/>
</dbReference>
<dbReference type="InterPro" id="IPR000795">
    <property type="entry name" value="T_Tr_GTP-bd_dom"/>
</dbReference>
<dbReference type="InterPro" id="IPR004544">
    <property type="entry name" value="TF_aIF-2_arc"/>
</dbReference>
<dbReference type="InterPro" id="IPR015760">
    <property type="entry name" value="TIF_IF2"/>
</dbReference>
<dbReference type="InterPro" id="IPR023115">
    <property type="entry name" value="TIF_IF2_dom3"/>
</dbReference>
<dbReference type="InterPro" id="IPR036925">
    <property type="entry name" value="TIF_IF2_dom3_sf"/>
</dbReference>
<dbReference type="InterPro" id="IPR009000">
    <property type="entry name" value="Transl_B-barrel_sf"/>
</dbReference>
<dbReference type="NCBIfam" id="TIGR00491">
    <property type="entry name" value="aIF-2"/>
    <property type="match status" value="1"/>
</dbReference>
<dbReference type="NCBIfam" id="NF003078">
    <property type="entry name" value="PRK04004.1"/>
    <property type="match status" value="1"/>
</dbReference>
<dbReference type="NCBIfam" id="NF011418">
    <property type="entry name" value="PRK14845.1"/>
    <property type="match status" value="1"/>
</dbReference>
<dbReference type="NCBIfam" id="TIGR00231">
    <property type="entry name" value="small_GTP"/>
    <property type="match status" value="1"/>
</dbReference>
<dbReference type="PANTHER" id="PTHR43381:SF4">
    <property type="entry name" value="EUKARYOTIC TRANSLATION INITIATION FACTOR 5B"/>
    <property type="match status" value="1"/>
</dbReference>
<dbReference type="PANTHER" id="PTHR43381">
    <property type="entry name" value="TRANSLATION INITIATION FACTOR IF-2-RELATED"/>
    <property type="match status" value="1"/>
</dbReference>
<dbReference type="Pfam" id="PF00009">
    <property type="entry name" value="GTP_EFTU"/>
    <property type="match status" value="1"/>
</dbReference>
<dbReference type="Pfam" id="PF03144">
    <property type="entry name" value="GTP_EFTU_D2"/>
    <property type="match status" value="1"/>
</dbReference>
<dbReference type="Pfam" id="PF14578">
    <property type="entry name" value="GTP_EFTU_D4"/>
    <property type="match status" value="1"/>
</dbReference>
<dbReference type="Pfam" id="PF11987">
    <property type="entry name" value="IF-2"/>
    <property type="match status" value="1"/>
</dbReference>
<dbReference type="PRINTS" id="PR00315">
    <property type="entry name" value="ELONGATNFCT"/>
</dbReference>
<dbReference type="SUPFAM" id="SSF52156">
    <property type="entry name" value="Initiation factor IF2/eIF5b, domain 3"/>
    <property type="match status" value="1"/>
</dbReference>
<dbReference type="SUPFAM" id="SSF52540">
    <property type="entry name" value="P-loop containing nucleoside triphosphate hydrolases"/>
    <property type="match status" value="1"/>
</dbReference>
<dbReference type="SUPFAM" id="SSF50447">
    <property type="entry name" value="Translation proteins"/>
    <property type="match status" value="1"/>
</dbReference>
<dbReference type="PROSITE" id="PS51722">
    <property type="entry name" value="G_TR_2"/>
    <property type="match status" value="1"/>
</dbReference>
<name>IF2P_STAMF</name>
<feature type="chain" id="PRO_0000335535" description="Probable translation initiation factor IF-2">
    <location>
        <begin position="1"/>
        <end position="606"/>
    </location>
</feature>
<feature type="domain" description="tr-type G">
    <location>
        <begin position="11"/>
        <end position="230"/>
    </location>
</feature>
<feature type="region of interest" description="G1" evidence="1">
    <location>
        <begin position="20"/>
        <end position="27"/>
    </location>
</feature>
<feature type="region of interest" description="G2" evidence="1">
    <location>
        <begin position="45"/>
        <end position="49"/>
    </location>
</feature>
<feature type="region of interest" description="G3" evidence="1">
    <location>
        <begin position="85"/>
        <end position="88"/>
    </location>
</feature>
<feature type="region of interest" description="G4" evidence="1">
    <location>
        <begin position="139"/>
        <end position="142"/>
    </location>
</feature>
<feature type="region of interest" description="G5" evidence="1">
    <location>
        <begin position="207"/>
        <end position="209"/>
    </location>
</feature>
<feature type="binding site" evidence="2">
    <location>
        <begin position="20"/>
        <end position="27"/>
    </location>
    <ligand>
        <name>GTP</name>
        <dbReference type="ChEBI" id="CHEBI:37565"/>
    </ligand>
</feature>
<feature type="binding site" evidence="2">
    <location>
        <begin position="85"/>
        <end position="89"/>
    </location>
    <ligand>
        <name>GTP</name>
        <dbReference type="ChEBI" id="CHEBI:37565"/>
    </ligand>
</feature>
<feature type="binding site" evidence="2">
    <location>
        <begin position="139"/>
        <end position="142"/>
    </location>
    <ligand>
        <name>GTP</name>
        <dbReference type="ChEBI" id="CHEBI:37565"/>
    </ligand>
</feature>
<reference key="1">
    <citation type="journal article" date="2009" name="BMC Genomics">
        <title>The complete genome sequence of Staphylothermus marinus reveals differences in sulfur metabolism among heterotrophic Crenarchaeota.</title>
        <authorList>
            <person name="Anderson I.J."/>
            <person name="Dharmarajan L."/>
            <person name="Rodriguez J."/>
            <person name="Hooper S."/>
            <person name="Porat I."/>
            <person name="Ulrich L.E."/>
            <person name="Elkins J.G."/>
            <person name="Mavromatis K."/>
            <person name="Sun H."/>
            <person name="Land M."/>
            <person name="Lapidus A."/>
            <person name="Lucas S."/>
            <person name="Barry K."/>
            <person name="Huber H."/>
            <person name="Zhulin I.B."/>
            <person name="Whitman W.B."/>
            <person name="Mukhopadhyay B."/>
            <person name="Woese C."/>
            <person name="Bristow J."/>
            <person name="Kyrpides N."/>
        </authorList>
    </citation>
    <scope>NUCLEOTIDE SEQUENCE [LARGE SCALE GENOMIC DNA]</scope>
    <source>
        <strain>ATCC 43588 / DSM 3639 / JCM 9404 / F1</strain>
    </source>
</reference>
<reference key="2">
    <citation type="journal article" date="2009" name="Stand. Genomic Sci.">
        <title>Complete genome sequence of Staphylothermus marinus Stetter and Fiala 1986 type strain F1.</title>
        <authorList>
            <person name="Anderson I.J."/>
            <person name="Sun H."/>
            <person name="Lapidus A."/>
            <person name="Copeland A."/>
            <person name="Glavina Del Rio T."/>
            <person name="Tice H."/>
            <person name="Dalin E."/>
            <person name="Lucas S."/>
            <person name="Barry K."/>
            <person name="Land M."/>
            <person name="Richardson P."/>
            <person name="Huber H."/>
            <person name="Kyrpides N.C."/>
        </authorList>
    </citation>
    <scope>NUCLEOTIDE SEQUENCE [LARGE SCALE GENOMIC DNA]</scope>
    <source>
        <strain>ATCC 43588 / DSM 3639 / JCM 9404 / F1</strain>
    </source>
</reference>
<accession>A3DMS0</accession>
<organism>
    <name type="scientific">Staphylothermus marinus (strain ATCC 43588 / DSM 3639 / JCM 9404 / F1)</name>
    <dbReference type="NCBI Taxonomy" id="399550"/>
    <lineage>
        <taxon>Archaea</taxon>
        <taxon>Thermoproteota</taxon>
        <taxon>Thermoprotei</taxon>
        <taxon>Desulfurococcales</taxon>
        <taxon>Desulfurococcaceae</taxon>
        <taxon>Staphylothermus</taxon>
    </lineage>
</organism>
<keyword id="KW-0342">GTP-binding</keyword>
<keyword id="KW-0396">Initiation factor</keyword>
<keyword id="KW-0547">Nucleotide-binding</keyword>
<keyword id="KW-0648">Protein biosynthesis</keyword>
<keyword id="KW-1185">Reference proteome</keyword>
<gene>
    <name evidence="2" type="primary">infB</name>
    <name type="ordered locus">Smar_0829</name>
</gene>
<proteinExistence type="inferred from homology"/>
<comment type="function">
    <text evidence="2">Function in general translation initiation by promoting the binding of the formylmethionine-tRNA to ribosomes. Seems to function along with eIF-2.</text>
</comment>
<comment type="similarity">
    <text evidence="2">Belongs to the TRAFAC class translation factor GTPase superfamily. Classic translation factor GTPase family. IF-2 subfamily.</text>
</comment>
<protein>
    <recommendedName>
        <fullName evidence="2">Probable translation initiation factor IF-2</fullName>
    </recommendedName>
</protein>
<evidence type="ECO:0000250" key="1"/>
<evidence type="ECO:0000255" key="2">
    <source>
        <dbReference type="HAMAP-Rule" id="MF_00100"/>
    </source>
</evidence>
<sequence length="606" mass="67873">MSSVKSGKSWIRQPIVVVLGHVDHGKTTLLDKIRGTAVAKKEPGEITQHVGASIVPASVLRKVAEPLKKYFPKLKIEIPGLLFVDTPGHELFSNLRRRGGSVADIAILVVDIMEGFQPQTWESIQILKERKVPFIVAANKIDRIPGWKPNHDQPFLETIRKQDPRIVSRLEELIYRLISQLYEAGFMAERFDRVKDFRTTVAIVPVSAKTGEGVPELLALLTGLVQRFMKKRLVTSEEPAKGVVLEVKEEPGLGTTIDVIIYDGVIRRGDTIVVGGKDKPIVTKVRALLMPRPLQDMRAHEGKFVSVEQVVAATGVKISAPDLDNALAGSPIFVVPSEDKIEEYIKIVKEEIESVRIKTDNIGVVVKADTLGTLEAVVEALKRENIPVRLADVGPVSKNDVLEASVSKNHRPEYGVIIAFNVKILPEAEEYAARENVKIFRHNVIYKLIEDYIGWVKQLREQEKIKELESLIRPGKIRILPGYIFRRSNPAIVGVEVIGGVIKPGYPLMRKDGMRLGTIMQIRDRDNVLKEARAGQSVAISIRGRILVGRHVDEGDILYTDIPKQHVHLWLTKYKNELSDDEKMVLKEIIEIKKKQDPFYGLVFGS</sequence>